<keyword id="KW-0687">Ribonucleoprotein</keyword>
<keyword id="KW-0689">Ribosomal protein</keyword>
<keyword id="KW-0694">RNA-binding</keyword>
<keyword id="KW-0699">rRNA-binding</keyword>
<sequence length="156" mass="16813">MNTVVKLNNIFSGLPKKKKTKVLGRGIGCGKGKTSGRGHKGQKARSGVSINGFEGGQQSIFTRLPKRGFNSLFKSKYSIVNLSTIQRLIDSKKIENVSAITKQVLFNLGVIPSIKEKIKILGDGKLNTAVAIEYDFISKSAGSQVTLLSSVSEDKV</sequence>
<comment type="function">
    <text evidence="1">Binds to the 23S rRNA.</text>
</comment>
<comment type="subunit">
    <text evidence="1">Part of the 50S ribosomal subunit.</text>
</comment>
<comment type="similarity">
    <text evidence="1">Belongs to the universal ribosomal protein uL15 family.</text>
</comment>
<gene>
    <name evidence="1" type="primary">rplO</name>
    <name type="ordered locus">Ecaj_0594</name>
</gene>
<organism>
    <name type="scientific">Ehrlichia canis (strain Jake)</name>
    <dbReference type="NCBI Taxonomy" id="269484"/>
    <lineage>
        <taxon>Bacteria</taxon>
        <taxon>Pseudomonadati</taxon>
        <taxon>Pseudomonadota</taxon>
        <taxon>Alphaproteobacteria</taxon>
        <taxon>Rickettsiales</taxon>
        <taxon>Anaplasmataceae</taxon>
        <taxon>Ehrlichia</taxon>
    </lineage>
</organism>
<dbReference type="EMBL" id="CP000107">
    <property type="protein sequence ID" value="AAZ68628.1"/>
    <property type="molecule type" value="Genomic_DNA"/>
</dbReference>
<dbReference type="RefSeq" id="WP_011304706.1">
    <property type="nucleotide sequence ID" value="NC_007354.1"/>
</dbReference>
<dbReference type="SMR" id="Q3YRM7"/>
<dbReference type="FunCoup" id="Q3YRM7">
    <property type="interactions" value="350"/>
</dbReference>
<dbReference type="STRING" id="269484.Ecaj_0594"/>
<dbReference type="KEGG" id="ecn:Ecaj_0594"/>
<dbReference type="eggNOG" id="COG0200">
    <property type="taxonomic scope" value="Bacteria"/>
</dbReference>
<dbReference type="HOGENOM" id="CLU_055188_4_0_5"/>
<dbReference type="InParanoid" id="Q3YRM7"/>
<dbReference type="Proteomes" id="UP000000435">
    <property type="component" value="Chromosome"/>
</dbReference>
<dbReference type="GO" id="GO:0015934">
    <property type="term" value="C:large ribosomal subunit"/>
    <property type="evidence" value="ECO:0007669"/>
    <property type="project" value="InterPro"/>
</dbReference>
<dbReference type="GO" id="GO:0019843">
    <property type="term" value="F:rRNA binding"/>
    <property type="evidence" value="ECO:0007669"/>
    <property type="project" value="UniProtKB-UniRule"/>
</dbReference>
<dbReference type="GO" id="GO:0003735">
    <property type="term" value="F:structural constituent of ribosome"/>
    <property type="evidence" value="ECO:0007669"/>
    <property type="project" value="InterPro"/>
</dbReference>
<dbReference type="GO" id="GO:0006412">
    <property type="term" value="P:translation"/>
    <property type="evidence" value="ECO:0007669"/>
    <property type="project" value="UniProtKB-UniRule"/>
</dbReference>
<dbReference type="Gene3D" id="3.100.10.10">
    <property type="match status" value="1"/>
</dbReference>
<dbReference type="HAMAP" id="MF_01341">
    <property type="entry name" value="Ribosomal_uL15"/>
    <property type="match status" value="1"/>
</dbReference>
<dbReference type="InterPro" id="IPR030878">
    <property type="entry name" value="Ribosomal_uL15"/>
</dbReference>
<dbReference type="InterPro" id="IPR021131">
    <property type="entry name" value="Ribosomal_uL15/eL18"/>
</dbReference>
<dbReference type="InterPro" id="IPR036227">
    <property type="entry name" value="Ribosomal_uL15/eL18_sf"/>
</dbReference>
<dbReference type="InterPro" id="IPR005749">
    <property type="entry name" value="Ribosomal_uL15_bac-type"/>
</dbReference>
<dbReference type="NCBIfam" id="TIGR01071">
    <property type="entry name" value="rplO_bact"/>
    <property type="match status" value="1"/>
</dbReference>
<dbReference type="PANTHER" id="PTHR12934">
    <property type="entry name" value="50S RIBOSOMAL PROTEIN L15"/>
    <property type="match status" value="1"/>
</dbReference>
<dbReference type="PANTHER" id="PTHR12934:SF11">
    <property type="entry name" value="LARGE RIBOSOMAL SUBUNIT PROTEIN UL15M"/>
    <property type="match status" value="1"/>
</dbReference>
<dbReference type="Pfam" id="PF00828">
    <property type="entry name" value="Ribosomal_L27A"/>
    <property type="match status" value="1"/>
</dbReference>
<dbReference type="SUPFAM" id="SSF52080">
    <property type="entry name" value="Ribosomal proteins L15p and L18e"/>
    <property type="match status" value="1"/>
</dbReference>
<reference key="1">
    <citation type="journal article" date="2006" name="J. Bacteriol.">
        <title>The genome of the obligately intracellular bacterium Ehrlichia canis reveals themes of complex membrane structure and immune evasion strategies.</title>
        <authorList>
            <person name="Mavromatis K."/>
            <person name="Doyle C.K."/>
            <person name="Lykidis A."/>
            <person name="Ivanova N."/>
            <person name="Francino M.P."/>
            <person name="Chain P."/>
            <person name="Shin M."/>
            <person name="Malfatti S."/>
            <person name="Larimer F."/>
            <person name="Copeland A."/>
            <person name="Detter J.C."/>
            <person name="Land M."/>
            <person name="Richardson P.M."/>
            <person name="Yu X.J."/>
            <person name="Walker D.H."/>
            <person name="McBride J.W."/>
            <person name="Kyrpides N.C."/>
        </authorList>
    </citation>
    <scope>NUCLEOTIDE SEQUENCE [LARGE SCALE GENOMIC DNA]</scope>
    <source>
        <strain>Jake</strain>
    </source>
</reference>
<feature type="chain" id="PRO_0000251508" description="Large ribosomal subunit protein uL15">
    <location>
        <begin position="1"/>
        <end position="156"/>
    </location>
</feature>
<feature type="region of interest" description="Disordered" evidence="2">
    <location>
        <begin position="26"/>
        <end position="46"/>
    </location>
</feature>
<feature type="compositionally biased region" description="Basic residues" evidence="2">
    <location>
        <begin position="34"/>
        <end position="43"/>
    </location>
</feature>
<protein>
    <recommendedName>
        <fullName evidence="1">Large ribosomal subunit protein uL15</fullName>
    </recommendedName>
    <alternativeName>
        <fullName evidence="3">50S ribosomal protein L15</fullName>
    </alternativeName>
</protein>
<proteinExistence type="inferred from homology"/>
<name>RL15_EHRCJ</name>
<accession>Q3YRM7</accession>
<evidence type="ECO:0000255" key="1">
    <source>
        <dbReference type="HAMAP-Rule" id="MF_01341"/>
    </source>
</evidence>
<evidence type="ECO:0000256" key="2">
    <source>
        <dbReference type="SAM" id="MobiDB-lite"/>
    </source>
</evidence>
<evidence type="ECO:0000305" key="3"/>